<name>TPIS_CLOPA</name>
<gene>
    <name type="primary">tpiA</name>
    <name type="synonym">tpi</name>
</gene>
<dbReference type="EC" id="5.3.1.1"/>
<dbReference type="UniPathway" id="UPA00109">
    <property type="reaction ID" value="UER00189"/>
</dbReference>
<dbReference type="UniPathway" id="UPA00138"/>
<dbReference type="GO" id="GO:0005737">
    <property type="term" value="C:cytoplasm"/>
    <property type="evidence" value="ECO:0007669"/>
    <property type="project" value="UniProtKB-SubCell"/>
</dbReference>
<dbReference type="GO" id="GO:0004807">
    <property type="term" value="F:triose-phosphate isomerase activity"/>
    <property type="evidence" value="ECO:0007669"/>
    <property type="project" value="UniProtKB-EC"/>
</dbReference>
<dbReference type="GO" id="GO:0006094">
    <property type="term" value="P:gluconeogenesis"/>
    <property type="evidence" value="ECO:0007669"/>
    <property type="project" value="UniProtKB-UniPathway"/>
</dbReference>
<dbReference type="GO" id="GO:0006096">
    <property type="term" value="P:glycolytic process"/>
    <property type="evidence" value="ECO:0007669"/>
    <property type="project" value="UniProtKB-UniPathway"/>
</dbReference>
<sequence length="19" mass="2055">MITPIIAGNXKLVNTISEE</sequence>
<protein>
    <recommendedName>
        <fullName>Triosephosphate isomerase</fullName>
        <shortName>TIM</shortName>
        <ecNumber>5.3.1.1</ecNumber>
    </recommendedName>
    <alternativeName>
        <fullName>CP 25</fullName>
    </alternativeName>
    <alternativeName>
        <fullName>Triose-phosphate isomerase</fullName>
    </alternativeName>
</protein>
<feature type="chain" id="PRO_0000090210" description="Triosephosphate isomerase">
    <location>
        <begin position="1"/>
        <end position="19" status="greater than"/>
    </location>
</feature>
<feature type="binding site" evidence="1">
    <location>
        <position position="9"/>
    </location>
    <ligand>
        <name>substrate</name>
    </ligand>
</feature>
<feature type="binding site" evidence="1">
    <location>
        <position position="11"/>
    </location>
    <ligand>
        <name>substrate</name>
    </ligand>
</feature>
<feature type="sequence variant">
    <original>M</original>
    <variation>S</variation>
    <location>
        <position position="1"/>
    </location>
</feature>
<feature type="sequence variant">
    <original>T</original>
    <variation>Y</variation>
    <location>
        <position position="3"/>
    </location>
</feature>
<feature type="non-terminal residue">
    <location>
        <position position="19"/>
    </location>
</feature>
<comment type="catalytic activity">
    <reaction evidence="1">
        <text>D-glyceraldehyde 3-phosphate = dihydroxyacetone phosphate</text>
        <dbReference type="Rhea" id="RHEA:18585"/>
        <dbReference type="ChEBI" id="CHEBI:57642"/>
        <dbReference type="ChEBI" id="CHEBI:59776"/>
        <dbReference type="EC" id="5.3.1.1"/>
    </reaction>
</comment>
<comment type="pathway">
    <text evidence="1">Carbohydrate biosynthesis; gluconeogenesis.</text>
</comment>
<comment type="pathway">
    <text evidence="1">Carbohydrate degradation; glycolysis; D-glyceraldehyde 3-phosphate from glycerone phosphate: step 1/1.</text>
</comment>
<comment type="subunit">
    <text evidence="1">Homodimer.</text>
</comment>
<comment type="subcellular location">
    <subcellularLocation>
        <location evidence="1">Cytoplasm</location>
    </subcellularLocation>
</comment>
<comment type="similarity">
    <text evidence="1">Belongs to the triosephosphate isomerase family.</text>
</comment>
<proteinExistence type="evidence at protein level"/>
<accession>P81348</accession>
<keyword id="KW-0963">Cytoplasm</keyword>
<keyword id="KW-0903">Direct protein sequencing</keyword>
<keyword id="KW-0312">Gluconeogenesis</keyword>
<keyword id="KW-0324">Glycolysis</keyword>
<keyword id="KW-0413">Isomerase</keyword>
<organism>
    <name type="scientific">Clostridium pasteurianum</name>
    <dbReference type="NCBI Taxonomy" id="1501"/>
    <lineage>
        <taxon>Bacteria</taxon>
        <taxon>Bacillati</taxon>
        <taxon>Bacillota</taxon>
        <taxon>Clostridia</taxon>
        <taxon>Eubacteriales</taxon>
        <taxon>Clostridiaceae</taxon>
        <taxon>Clostridium</taxon>
    </lineage>
</organism>
<reference key="1">
    <citation type="journal article" date="1998" name="Electrophoresis">
        <title>Two-dimensional gel electrophoresis separation and N-terminal sequence analysis of proteins from Clostridium pasteurianum W5.</title>
        <authorList>
            <person name="Flengsrud R."/>
            <person name="Skjeldal L."/>
        </authorList>
    </citation>
    <scope>PROTEIN SEQUENCE</scope>
    <source>
        <strain>ATCC 6013 / DSM 525 / NCIB 9486 / VKM B-1774 / W5</strain>
    </source>
</reference>
<evidence type="ECO:0000255" key="1">
    <source>
        <dbReference type="PROSITE-ProRule" id="PRU10127"/>
    </source>
</evidence>